<comment type="function">
    <text evidence="1">Catalyzes the formation of acetyl phosphate from acetate and ATP. Can also catalyze the reverse reaction.</text>
</comment>
<comment type="catalytic activity">
    <reaction evidence="1">
        <text>acetate + ATP = acetyl phosphate + ADP</text>
        <dbReference type="Rhea" id="RHEA:11352"/>
        <dbReference type="ChEBI" id="CHEBI:22191"/>
        <dbReference type="ChEBI" id="CHEBI:30089"/>
        <dbReference type="ChEBI" id="CHEBI:30616"/>
        <dbReference type="ChEBI" id="CHEBI:456216"/>
        <dbReference type="EC" id="2.7.2.1"/>
    </reaction>
</comment>
<comment type="cofactor">
    <cofactor evidence="1">
        <name>Mg(2+)</name>
        <dbReference type="ChEBI" id="CHEBI:18420"/>
    </cofactor>
    <cofactor evidence="1">
        <name>Mn(2+)</name>
        <dbReference type="ChEBI" id="CHEBI:29035"/>
    </cofactor>
    <text evidence="1">Mg(2+). Can also accept Mn(2+).</text>
</comment>
<comment type="pathway">
    <text evidence="1">Metabolic intermediate biosynthesis; acetyl-CoA biosynthesis; acetyl-CoA from acetate: step 1/2.</text>
</comment>
<comment type="subunit">
    <text evidence="1">Homodimer.</text>
</comment>
<comment type="subcellular location">
    <subcellularLocation>
        <location evidence="1">Cytoplasm</location>
    </subcellularLocation>
</comment>
<comment type="similarity">
    <text evidence="1">Belongs to the acetokinase family.</text>
</comment>
<feature type="chain" id="PRO_1000002253" description="Acetate kinase">
    <location>
        <begin position="1"/>
        <end position="399"/>
    </location>
</feature>
<feature type="active site" description="Proton donor/acceptor" evidence="1">
    <location>
        <position position="148"/>
    </location>
</feature>
<feature type="binding site" evidence="1">
    <location>
        <position position="10"/>
    </location>
    <ligand>
        <name>Mg(2+)</name>
        <dbReference type="ChEBI" id="CHEBI:18420"/>
    </ligand>
</feature>
<feature type="binding site" evidence="1">
    <location>
        <position position="17"/>
    </location>
    <ligand>
        <name>ATP</name>
        <dbReference type="ChEBI" id="CHEBI:30616"/>
    </ligand>
</feature>
<feature type="binding site" evidence="1">
    <location>
        <position position="91"/>
    </location>
    <ligand>
        <name>substrate</name>
    </ligand>
</feature>
<feature type="binding site" evidence="1">
    <location>
        <begin position="208"/>
        <end position="212"/>
    </location>
    <ligand>
        <name>ATP</name>
        <dbReference type="ChEBI" id="CHEBI:30616"/>
    </ligand>
</feature>
<feature type="binding site" evidence="1">
    <location>
        <begin position="283"/>
        <end position="285"/>
    </location>
    <ligand>
        <name>ATP</name>
        <dbReference type="ChEBI" id="CHEBI:30616"/>
    </ligand>
</feature>
<feature type="binding site" evidence="1">
    <location>
        <begin position="331"/>
        <end position="335"/>
    </location>
    <ligand>
        <name>ATP</name>
        <dbReference type="ChEBI" id="CHEBI:30616"/>
    </ligand>
</feature>
<feature type="binding site" evidence="1">
    <location>
        <position position="385"/>
    </location>
    <ligand>
        <name>Mg(2+)</name>
        <dbReference type="ChEBI" id="CHEBI:18420"/>
    </ligand>
</feature>
<feature type="site" description="Transition state stabilizer" evidence="1">
    <location>
        <position position="180"/>
    </location>
</feature>
<feature type="site" description="Transition state stabilizer" evidence="1">
    <location>
        <position position="241"/>
    </location>
</feature>
<sequence>MSNNLVLVLNCGSSSLKFAVIDAQTGDDQISGLAECFGLEDSRIKWKINGEKHEAALGAFTAHREAVEYIVNKILAEQPELAAKIQAVGHRIVHGGEKFTRSVIIDESVIKGIEDCASLAPLHNPAHLIGIRAAIASFPKLPQVAVFDTAFHQSMPDRAYVYALPYKLYREHGIRRYGMHGTSHLFVSREAAKMLNKPIEETNVICAHLGNGASVTAIKGGKSVDTSMGLTPLEGLVMGTRCGDIDPSIIYHLVHQLGYTLEEVNNLMNKQSGLLGISELTNDCRGIEEGYADGHKGATLALEIFCYRLAKYIASYTVPLGRLDAVVFTGGIGENSDLIREKVLNMLEIFNFHVDSERNKAARFGKKGIITQDKGTIAMVIPTNEEWVIAEDSIKLINK</sequence>
<protein>
    <recommendedName>
        <fullName evidence="1">Acetate kinase</fullName>
        <ecNumber evidence="1">2.7.2.1</ecNumber>
    </recommendedName>
    <alternativeName>
        <fullName evidence="1">Acetokinase</fullName>
    </alternativeName>
</protein>
<name>ACKA_SHEB8</name>
<proteinExistence type="inferred from homology"/>
<gene>
    <name evidence="1" type="primary">ackA</name>
    <name type="ordered locus">Shew185_2693</name>
</gene>
<accession>A6WPT9</accession>
<reference key="1">
    <citation type="submission" date="2007-07" db="EMBL/GenBank/DDBJ databases">
        <title>Complete sequence of chromosome of Shewanella baltica OS185.</title>
        <authorList>
            <consortium name="US DOE Joint Genome Institute"/>
            <person name="Copeland A."/>
            <person name="Lucas S."/>
            <person name="Lapidus A."/>
            <person name="Barry K."/>
            <person name="Glavina del Rio T."/>
            <person name="Dalin E."/>
            <person name="Tice H."/>
            <person name="Pitluck S."/>
            <person name="Sims D."/>
            <person name="Brettin T."/>
            <person name="Bruce D."/>
            <person name="Detter J.C."/>
            <person name="Han C."/>
            <person name="Schmutz J."/>
            <person name="Larimer F."/>
            <person name="Land M."/>
            <person name="Hauser L."/>
            <person name="Kyrpides N."/>
            <person name="Mikhailova N."/>
            <person name="Brettar I."/>
            <person name="Rodrigues J."/>
            <person name="Konstantinidis K."/>
            <person name="Tiedje J."/>
            <person name="Richardson P."/>
        </authorList>
    </citation>
    <scope>NUCLEOTIDE SEQUENCE [LARGE SCALE GENOMIC DNA]</scope>
    <source>
        <strain>OS185</strain>
    </source>
</reference>
<organism>
    <name type="scientific">Shewanella baltica (strain OS185)</name>
    <dbReference type="NCBI Taxonomy" id="402882"/>
    <lineage>
        <taxon>Bacteria</taxon>
        <taxon>Pseudomonadati</taxon>
        <taxon>Pseudomonadota</taxon>
        <taxon>Gammaproteobacteria</taxon>
        <taxon>Alteromonadales</taxon>
        <taxon>Shewanellaceae</taxon>
        <taxon>Shewanella</taxon>
    </lineage>
</organism>
<keyword id="KW-0067">ATP-binding</keyword>
<keyword id="KW-0963">Cytoplasm</keyword>
<keyword id="KW-0418">Kinase</keyword>
<keyword id="KW-0460">Magnesium</keyword>
<keyword id="KW-0479">Metal-binding</keyword>
<keyword id="KW-0547">Nucleotide-binding</keyword>
<keyword id="KW-0808">Transferase</keyword>
<evidence type="ECO:0000255" key="1">
    <source>
        <dbReference type="HAMAP-Rule" id="MF_00020"/>
    </source>
</evidence>
<dbReference type="EC" id="2.7.2.1" evidence="1"/>
<dbReference type="EMBL" id="CP000753">
    <property type="protein sequence ID" value="ABS08828.1"/>
    <property type="molecule type" value="Genomic_DNA"/>
</dbReference>
<dbReference type="RefSeq" id="WP_006082161.1">
    <property type="nucleotide sequence ID" value="NC_009665.1"/>
</dbReference>
<dbReference type="SMR" id="A6WPT9"/>
<dbReference type="GeneID" id="11772866"/>
<dbReference type="KEGG" id="sbm:Shew185_2693"/>
<dbReference type="HOGENOM" id="CLU_020352_0_1_6"/>
<dbReference type="UniPathway" id="UPA00340">
    <property type="reaction ID" value="UER00458"/>
</dbReference>
<dbReference type="GO" id="GO:0005829">
    <property type="term" value="C:cytosol"/>
    <property type="evidence" value="ECO:0007669"/>
    <property type="project" value="TreeGrafter"/>
</dbReference>
<dbReference type="GO" id="GO:0008776">
    <property type="term" value="F:acetate kinase activity"/>
    <property type="evidence" value="ECO:0007669"/>
    <property type="project" value="UniProtKB-UniRule"/>
</dbReference>
<dbReference type="GO" id="GO:0005524">
    <property type="term" value="F:ATP binding"/>
    <property type="evidence" value="ECO:0007669"/>
    <property type="project" value="UniProtKB-KW"/>
</dbReference>
<dbReference type="GO" id="GO:0000287">
    <property type="term" value="F:magnesium ion binding"/>
    <property type="evidence" value="ECO:0007669"/>
    <property type="project" value="UniProtKB-UniRule"/>
</dbReference>
<dbReference type="GO" id="GO:0006083">
    <property type="term" value="P:acetate metabolic process"/>
    <property type="evidence" value="ECO:0007669"/>
    <property type="project" value="TreeGrafter"/>
</dbReference>
<dbReference type="GO" id="GO:0006085">
    <property type="term" value="P:acetyl-CoA biosynthetic process"/>
    <property type="evidence" value="ECO:0007669"/>
    <property type="project" value="UniProtKB-UniRule"/>
</dbReference>
<dbReference type="CDD" id="cd24010">
    <property type="entry name" value="ASKHA_NBD_AcK_PK"/>
    <property type="match status" value="1"/>
</dbReference>
<dbReference type="FunFam" id="3.30.420.40:FF:000041">
    <property type="entry name" value="Acetate kinase"/>
    <property type="match status" value="1"/>
</dbReference>
<dbReference type="Gene3D" id="3.30.420.40">
    <property type="match status" value="2"/>
</dbReference>
<dbReference type="HAMAP" id="MF_00020">
    <property type="entry name" value="Acetate_kinase"/>
    <property type="match status" value="1"/>
</dbReference>
<dbReference type="InterPro" id="IPR004372">
    <property type="entry name" value="Ac/propionate_kinase"/>
</dbReference>
<dbReference type="InterPro" id="IPR000890">
    <property type="entry name" value="Aliphatic_acid_kin_short-chain"/>
</dbReference>
<dbReference type="InterPro" id="IPR023865">
    <property type="entry name" value="Aliphatic_acid_kinase_CS"/>
</dbReference>
<dbReference type="InterPro" id="IPR043129">
    <property type="entry name" value="ATPase_NBD"/>
</dbReference>
<dbReference type="NCBIfam" id="TIGR00016">
    <property type="entry name" value="ackA"/>
    <property type="match status" value="1"/>
</dbReference>
<dbReference type="PANTHER" id="PTHR21060">
    <property type="entry name" value="ACETATE KINASE"/>
    <property type="match status" value="1"/>
</dbReference>
<dbReference type="PANTHER" id="PTHR21060:SF21">
    <property type="entry name" value="ACETATE KINASE"/>
    <property type="match status" value="1"/>
</dbReference>
<dbReference type="Pfam" id="PF00871">
    <property type="entry name" value="Acetate_kinase"/>
    <property type="match status" value="1"/>
</dbReference>
<dbReference type="PIRSF" id="PIRSF000722">
    <property type="entry name" value="Acetate_prop_kin"/>
    <property type="match status" value="1"/>
</dbReference>
<dbReference type="PRINTS" id="PR00471">
    <property type="entry name" value="ACETATEKNASE"/>
</dbReference>
<dbReference type="SUPFAM" id="SSF53067">
    <property type="entry name" value="Actin-like ATPase domain"/>
    <property type="match status" value="2"/>
</dbReference>
<dbReference type="PROSITE" id="PS01075">
    <property type="entry name" value="ACETATE_KINASE_1"/>
    <property type="match status" value="1"/>
</dbReference>
<dbReference type="PROSITE" id="PS01076">
    <property type="entry name" value="ACETATE_KINASE_2"/>
    <property type="match status" value="1"/>
</dbReference>